<feature type="chain" id="PRO_0000132997" description="Uncharacterized 19.9 kDa protein">
    <location>
        <begin position="1"/>
        <end position="176"/>
    </location>
</feature>
<feature type="region of interest" description="Disordered" evidence="1">
    <location>
        <begin position="71"/>
        <end position="176"/>
    </location>
</feature>
<feature type="compositionally biased region" description="Low complexity" evidence="1">
    <location>
        <begin position="77"/>
        <end position="87"/>
    </location>
</feature>
<feature type="compositionally biased region" description="Low complexity" evidence="1">
    <location>
        <begin position="100"/>
        <end position="109"/>
    </location>
</feature>
<feature type="compositionally biased region" description="Basic residues" evidence="1">
    <location>
        <begin position="140"/>
        <end position="152"/>
    </location>
</feature>
<sequence length="176" mass="19856">MYHLPDTLYEQEKMPRRAKRLFVDTFSQHHKLNAGDEEAAMQKARQALEERYVRVNDLQWIPRRAAYEIIRDDMSSDSDGPAASPPGDHARPNRDKRRVSYSSSDSSARSSDDQLISARGSDDQLISTRSSDDHLVGAGKARRPARKKKRIGKVVASQKFVGGGAQYSTDDDEDDY</sequence>
<proteinExistence type="predicted"/>
<evidence type="ECO:0000256" key="1">
    <source>
        <dbReference type="SAM" id="MobiDB-lite"/>
    </source>
</evidence>
<organism>
    <name type="scientific">Orgyia pseudotsugata multicapsid polyhedrosis virus</name>
    <name type="common">OpMNPV</name>
    <dbReference type="NCBI Taxonomy" id="262177"/>
    <lineage>
        <taxon>Viruses</taxon>
        <taxon>Viruses incertae sedis</taxon>
        <taxon>Naldaviricetes</taxon>
        <taxon>Lefavirales</taxon>
        <taxon>Baculoviridae</taxon>
        <taxon>Alphabaculovirus</taxon>
        <taxon>Alphabaculovirus orpseudotsugatae</taxon>
    </lineage>
</organism>
<reference key="1">
    <citation type="journal article" date="1997" name="Virology">
        <title>The sequence of the Orgyia pseudotsugata multinucleocapsid nuclear polyhedrosis virus genome.</title>
        <authorList>
            <person name="Ahrens C.H."/>
            <person name="Russell R.R."/>
            <person name="Funk C.J."/>
            <person name="Evans J."/>
            <person name="Harwood S."/>
            <person name="Rohrmann G.F."/>
        </authorList>
    </citation>
    <scope>NUCLEOTIDE SEQUENCE [LARGE SCALE GENOMIC DNA]</scope>
</reference>
<keyword id="KW-1185">Reference proteome</keyword>
<protein>
    <recommendedName>
        <fullName>Uncharacterized 19.9 kDa protein</fullName>
    </recommendedName>
</protein>
<name>Y059_NPVOP</name>
<gene>
    <name type="ORF">ORF62</name>
</gene>
<organismHost>
    <name type="scientific">Orgyia pseudotsugata</name>
    <name type="common">Douglas-fir tussock moth</name>
    <dbReference type="NCBI Taxonomy" id="33414"/>
</organismHost>
<accession>O10316</accession>
<dbReference type="EMBL" id="U75930">
    <property type="protein sequence ID" value="AAC59061.1"/>
    <property type="molecule type" value="Genomic_DNA"/>
</dbReference>
<dbReference type="RefSeq" id="NP_046218.1">
    <property type="nucleotide sequence ID" value="NC_001875.2"/>
</dbReference>
<dbReference type="SMR" id="O10316"/>
<dbReference type="KEGG" id="vg:911999"/>
<dbReference type="OrthoDB" id="18212at10239"/>
<dbReference type="Proteomes" id="UP000009248">
    <property type="component" value="Genome"/>
</dbReference>
<dbReference type="InterPro" id="IPR009317">
    <property type="entry name" value="ChaB"/>
</dbReference>
<dbReference type="InterPro" id="IPR037205">
    <property type="entry name" value="ChaB_sf"/>
</dbReference>
<dbReference type="Pfam" id="PF06150">
    <property type="entry name" value="ChaB"/>
    <property type="match status" value="1"/>
</dbReference>
<dbReference type="SUPFAM" id="SSF140376">
    <property type="entry name" value="ChaB-like"/>
    <property type="match status" value="1"/>
</dbReference>